<protein>
    <recommendedName>
        <fullName evidence="1">Glutamate--tRNA ligase</fullName>
        <ecNumber evidence="1">6.1.1.17</ecNumber>
    </recommendedName>
    <alternativeName>
        <fullName evidence="1">Glutamyl-tRNA synthetase</fullName>
        <shortName evidence="1">GluRS</shortName>
    </alternativeName>
</protein>
<reference key="1">
    <citation type="journal article" date="2007" name="PLoS Genet.">
        <title>Being pathogenic, plastic, and sexual while living with a nearly minimal bacterial genome.</title>
        <authorList>
            <person name="Sirand-Pugnet P."/>
            <person name="Lartigue C."/>
            <person name="Marenda M."/>
            <person name="Jacob D."/>
            <person name="Barre A."/>
            <person name="Barbe V."/>
            <person name="Schenowitz C."/>
            <person name="Mangenot S."/>
            <person name="Couloux A."/>
            <person name="Segurens B."/>
            <person name="de Daruvar A."/>
            <person name="Blanchard A."/>
            <person name="Citti C."/>
        </authorList>
    </citation>
    <scope>NUCLEOTIDE SEQUENCE [LARGE SCALE GENOMIC DNA]</scope>
    <source>
        <strain>NCTC 10123 / CIP 59.7 / PG2</strain>
    </source>
</reference>
<sequence length="463" mass="53847">MNKVRTRYAPSPTGYLHIGGARTALFCYLFAKHYNGTFVFRLEDTDVKRNVADGERSQLENLKWLGIIPDESPLNPNEKYGKYRQSEKLERYRQIANELVQKGLAYKSYDTSEELEMQHSEAEKNGIASFRYDKNWLKISEEEKQKRDKAGEYSIRFSMPKDVVYEWDDIVRGKISFDSNDIGDWVIQKSDGYPTYNFAVVVDDFDMEITHVLRGEEHITNTPRQLSIYNALGWKAPEFGHLTVITNMEGKKLSKRDTSLKQFIEDYKNDGYDPHAIFNFLSLLGWTSADNSEVMTHDEIIAKFEPSRLSKSPSKFDIKKMQWFSKQYIKNMDNESIINKLNLNNDEWTNLFVDTFKQSVFALKQLLVEKENYDKPSETAPSLTQADLEVVLSFKNEFQNKDFTISQIQEAIDQVAFKTGKKGKNLFMPIRLATTYIEHGPELAKSIYLFGKDIILKRLSQWN</sequence>
<feature type="chain" id="PRO_1000090092" description="Glutamate--tRNA ligase">
    <location>
        <begin position="1"/>
        <end position="463"/>
    </location>
</feature>
<feature type="short sequence motif" description="'HIGH' region" evidence="1">
    <location>
        <begin position="10"/>
        <end position="20"/>
    </location>
</feature>
<feature type="short sequence motif" description="'KMSKS' region" evidence="1">
    <location>
        <begin position="252"/>
        <end position="256"/>
    </location>
</feature>
<feature type="binding site" evidence="1">
    <location>
        <position position="255"/>
    </location>
    <ligand>
        <name>ATP</name>
        <dbReference type="ChEBI" id="CHEBI:30616"/>
    </ligand>
</feature>
<name>SYE_MYCAP</name>
<organism>
    <name type="scientific">Mycoplasmopsis agalactiae (strain NCTC 10123 / CIP 59.7 / PG2)</name>
    <name type="common">Mycoplasma agalactiae</name>
    <dbReference type="NCBI Taxonomy" id="347257"/>
    <lineage>
        <taxon>Bacteria</taxon>
        <taxon>Bacillati</taxon>
        <taxon>Mycoplasmatota</taxon>
        <taxon>Mycoplasmoidales</taxon>
        <taxon>Metamycoplasmataceae</taxon>
        <taxon>Mycoplasmopsis</taxon>
    </lineage>
</organism>
<evidence type="ECO:0000255" key="1">
    <source>
        <dbReference type="HAMAP-Rule" id="MF_00022"/>
    </source>
</evidence>
<accession>A5IZ19</accession>
<gene>
    <name evidence="1" type="primary">gltX</name>
    <name type="ordered locus">MAG5780</name>
</gene>
<comment type="function">
    <text evidence="1">Catalyzes the attachment of glutamate to tRNA(Glu) in a two-step reaction: glutamate is first activated by ATP to form Glu-AMP and then transferred to the acceptor end of tRNA(Glu).</text>
</comment>
<comment type="catalytic activity">
    <reaction evidence="1">
        <text>tRNA(Glu) + L-glutamate + ATP = L-glutamyl-tRNA(Glu) + AMP + diphosphate</text>
        <dbReference type="Rhea" id="RHEA:23540"/>
        <dbReference type="Rhea" id="RHEA-COMP:9663"/>
        <dbReference type="Rhea" id="RHEA-COMP:9680"/>
        <dbReference type="ChEBI" id="CHEBI:29985"/>
        <dbReference type="ChEBI" id="CHEBI:30616"/>
        <dbReference type="ChEBI" id="CHEBI:33019"/>
        <dbReference type="ChEBI" id="CHEBI:78442"/>
        <dbReference type="ChEBI" id="CHEBI:78520"/>
        <dbReference type="ChEBI" id="CHEBI:456215"/>
        <dbReference type="EC" id="6.1.1.17"/>
    </reaction>
</comment>
<comment type="subunit">
    <text evidence="1">Monomer.</text>
</comment>
<comment type="subcellular location">
    <subcellularLocation>
        <location evidence="1">Cytoplasm</location>
    </subcellularLocation>
</comment>
<comment type="similarity">
    <text evidence="1">Belongs to the class-I aminoacyl-tRNA synthetase family. Glutamate--tRNA ligase type 1 subfamily.</text>
</comment>
<dbReference type="EC" id="6.1.1.17" evidence="1"/>
<dbReference type="EMBL" id="CU179680">
    <property type="protein sequence ID" value="CAL59278.1"/>
    <property type="molecule type" value="Genomic_DNA"/>
</dbReference>
<dbReference type="RefSeq" id="WP_011949736.1">
    <property type="nucleotide sequence ID" value="NC_009497.1"/>
</dbReference>
<dbReference type="SMR" id="A5IZ19"/>
<dbReference type="STRING" id="347257.MAG5780"/>
<dbReference type="GeneID" id="93358315"/>
<dbReference type="KEGG" id="maa:MAG5780"/>
<dbReference type="HOGENOM" id="CLU_015768_6_1_14"/>
<dbReference type="Proteomes" id="UP000007065">
    <property type="component" value="Chromosome"/>
</dbReference>
<dbReference type="GO" id="GO:0005829">
    <property type="term" value="C:cytosol"/>
    <property type="evidence" value="ECO:0007669"/>
    <property type="project" value="TreeGrafter"/>
</dbReference>
<dbReference type="GO" id="GO:0005524">
    <property type="term" value="F:ATP binding"/>
    <property type="evidence" value="ECO:0007669"/>
    <property type="project" value="UniProtKB-UniRule"/>
</dbReference>
<dbReference type="GO" id="GO:0004818">
    <property type="term" value="F:glutamate-tRNA ligase activity"/>
    <property type="evidence" value="ECO:0007669"/>
    <property type="project" value="UniProtKB-UniRule"/>
</dbReference>
<dbReference type="GO" id="GO:0000049">
    <property type="term" value="F:tRNA binding"/>
    <property type="evidence" value="ECO:0007669"/>
    <property type="project" value="InterPro"/>
</dbReference>
<dbReference type="GO" id="GO:0008270">
    <property type="term" value="F:zinc ion binding"/>
    <property type="evidence" value="ECO:0007669"/>
    <property type="project" value="InterPro"/>
</dbReference>
<dbReference type="GO" id="GO:0006424">
    <property type="term" value="P:glutamyl-tRNA aminoacylation"/>
    <property type="evidence" value="ECO:0007669"/>
    <property type="project" value="UniProtKB-UniRule"/>
</dbReference>
<dbReference type="CDD" id="cd00808">
    <property type="entry name" value="GluRS_core"/>
    <property type="match status" value="1"/>
</dbReference>
<dbReference type="FunFam" id="3.40.50.620:FF:000007">
    <property type="entry name" value="Glutamate--tRNA ligase"/>
    <property type="match status" value="1"/>
</dbReference>
<dbReference type="Gene3D" id="1.10.10.350">
    <property type="match status" value="1"/>
</dbReference>
<dbReference type="Gene3D" id="3.40.50.620">
    <property type="entry name" value="HUPs"/>
    <property type="match status" value="1"/>
</dbReference>
<dbReference type="HAMAP" id="MF_00022">
    <property type="entry name" value="Glu_tRNA_synth_type1"/>
    <property type="match status" value="1"/>
</dbReference>
<dbReference type="InterPro" id="IPR045462">
    <property type="entry name" value="aa-tRNA-synth_I_cd-bd"/>
</dbReference>
<dbReference type="InterPro" id="IPR020751">
    <property type="entry name" value="aa-tRNA-synth_I_codon-bd_sub2"/>
</dbReference>
<dbReference type="InterPro" id="IPR001412">
    <property type="entry name" value="aa-tRNA-synth_I_CS"/>
</dbReference>
<dbReference type="InterPro" id="IPR008925">
    <property type="entry name" value="aa_tRNA-synth_I_cd-bd_sf"/>
</dbReference>
<dbReference type="InterPro" id="IPR004527">
    <property type="entry name" value="Glu-tRNA-ligase_bac/mito"/>
</dbReference>
<dbReference type="InterPro" id="IPR000924">
    <property type="entry name" value="Glu/Gln-tRNA-synth"/>
</dbReference>
<dbReference type="InterPro" id="IPR020058">
    <property type="entry name" value="Glu/Gln-tRNA-synth_Ib_cat-dom"/>
</dbReference>
<dbReference type="InterPro" id="IPR049940">
    <property type="entry name" value="GluQ/Sye"/>
</dbReference>
<dbReference type="InterPro" id="IPR033910">
    <property type="entry name" value="GluRS_core"/>
</dbReference>
<dbReference type="InterPro" id="IPR014729">
    <property type="entry name" value="Rossmann-like_a/b/a_fold"/>
</dbReference>
<dbReference type="NCBIfam" id="TIGR00464">
    <property type="entry name" value="gltX_bact"/>
    <property type="match status" value="1"/>
</dbReference>
<dbReference type="PANTHER" id="PTHR43311">
    <property type="entry name" value="GLUTAMATE--TRNA LIGASE"/>
    <property type="match status" value="1"/>
</dbReference>
<dbReference type="PANTHER" id="PTHR43311:SF2">
    <property type="entry name" value="GLUTAMATE--TRNA LIGASE, MITOCHONDRIAL-RELATED"/>
    <property type="match status" value="1"/>
</dbReference>
<dbReference type="Pfam" id="PF19269">
    <property type="entry name" value="Anticodon_2"/>
    <property type="match status" value="1"/>
</dbReference>
<dbReference type="Pfam" id="PF00749">
    <property type="entry name" value="tRNA-synt_1c"/>
    <property type="match status" value="1"/>
</dbReference>
<dbReference type="PRINTS" id="PR00987">
    <property type="entry name" value="TRNASYNTHGLU"/>
</dbReference>
<dbReference type="SUPFAM" id="SSF48163">
    <property type="entry name" value="An anticodon-binding domain of class I aminoacyl-tRNA synthetases"/>
    <property type="match status" value="1"/>
</dbReference>
<dbReference type="SUPFAM" id="SSF52374">
    <property type="entry name" value="Nucleotidylyl transferase"/>
    <property type="match status" value="1"/>
</dbReference>
<dbReference type="PROSITE" id="PS00178">
    <property type="entry name" value="AA_TRNA_LIGASE_I"/>
    <property type="match status" value="1"/>
</dbReference>
<keyword id="KW-0030">Aminoacyl-tRNA synthetase</keyword>
<keyword id="KW-0067">ATP-binding</keyword>
<keyword id="KW-0963">Cytoplasm</keyword>
<keyword id="KW-0436">Ligase</keyword>
<keyword id="KW-0547">Nucleotide-binding</keyword>
<keyword id="KW-0648">Protein biosynthesis</keyword>
<keyword id="KW-1185">Reference proteome</keyword>
<proteinExistence type="inferred from homology"/>